<comment type="function">
    <text evidence="2">Catalyzes the transfer of a two-carbon ketol group from a ketose donor to an aldose acceptor, likely via a covalent intermediate with the cofactor thiamine pyrophosphate. Can use L-erythrulose as donor and D-ribose-5-phosphate as acceptor substrates, forming glycolaldehyde and D-sedoheptulose-7-phosphate. For synthetic purposes, is able to use hydroxypyruvate (HPA) as donor substrate, making the reaction irreversible due to the release of carbon dioxide, and various aldehydes as acceptor substrates, which leads to the corresponding ketoses. Thus, using hydroxypyruvate as donor and three different aldehydes as acceptors, i.e. glycolaldehyde, D-glyceraldehyde and butyraldehyde, the enzyme stereoselectively forms the corresponding products L-erythrulose, D-xylulose and (3S)-1,3-dihydroxyhexan-2-one, respectively.</text>
</comment>
<comment type="catalytic activity">
    <reaction evidence="1">
        <text>D-sedoheptulose 7-phosphate + D-glyceraldehyde 3-phosphate = aldehydo-D-ribose 5-phosphate + D-xylulose 5-phosphate</text>
        <dbReference type="Rhea" id="RHEA:10508"/>
        <dbReference type="ChEBI" id="CHEBI:57483"/>
        <dbReference type="ChEBI" id="CHEBI:57737"/>
        <dbReference type="ChEBI" id="CHEBI:58273"/>
        <dbReference type="ChEBI" id="CHEBI:59776"/>
        <dbReference type="EC" id="2.2.1.1"/>
    </reaction>
</comment>
<comment type="cofactor">
    <cofactor evidence="5">
        <name>Mg(2+)</name>
        <dbReference type="ChEBI" id="CHEBI:18420"/>
    </cofactor>
    <text evidence="1">Binds 1 Mg(2+) ion per subunit.</text>
</comment>
<comment type="cofactor">
    <cofactor evidence="5">
        <name>thiamine diphosphate</name>
        <dbReference type="ChEBI" id="CHEBI:58937"/>
    </cofactor>
    <text evidence="1">Binds 1 thiamine pyrophosphate per subunit.</text>
</comment>
<comment type="biophysicochemical properties">
    <kinetics>
        <KM evidence="2">5.2 mM for L-erythrulose (at 25 degrees Celsius)</KM>
        <KM evidence="2">0.2 mM for D-ribose 5-phosphate (at 25 degrees Celsius)</KM>
        <KM evidence="2">8 mM for L-erythrulose (at 50 degrees Celsius)</KM>
        <KM evidence="2">0.13 mM for D-ribose 5-phosphate (at 50 degrees Celsius)</KM>
        <Vmax evidence="2">1.0 umol/min/mg enzyme for the reaction with L-erythrulose and D-ribose 5-phosphate as substrates (at 25 degrees Celsius)</Vmax>
        <Vmax evidence="2">8.4 umol/min/mg enzyme for the reaction with L-erythrulose and D-ribose 5-phosphate as substrates (at 50 degrees Celsius)</Vmax>
    </kinetics>
    <phDependence>
        <text evidence="2">Optimum pH is 7-8.</text>
    </phDependence>
    <temperatureDependence>
        <text evidence="2">Optimum temperature is around 60-70 degrees Celsius. Thermostable. Retains 100% activity for one week at 50 degrees Celsius and for 3 days at 65 degrees Celsius. Activity decreases rapidly at 75 degrees Celsius (half-life is about 15 minutes), and at 85 degrees Celsius loses its activity immediately.</text>
    </temperatureDependence>
</comment>
<comment type="subunit">
    <text evidence="1">Homodimer.</text>
</comment>
<comment type="biotechnology">
    <text evidence="5">The thermostability, stereoselectivity and wide substrate specificity of this enzyme offers good opportunities for applications in biocatalysis for ketose and chiral threo-diols synthesis.</text>
</comment>
<comment type="similarity">
    <text evidence="4">Belongs to the transketolase family.</text>
</comment>
<dbReference type="EC" id="2.2.1.1" evidence="5"/>
<dbReference type="EMBL" id="LN871220">
    <property type="protein sequence ID" value="CTQ31223.1"/>
    <property type="molecule type" value="Genomic_DNA"/>
</dbReference>
<dbReference type="PDB" id="8CIP">
    <property type="method" value="X-ray"/>
    <property type="resolution" value="2.10 A"/>
    <property type="chains" value="A/B/C/D=1-668"/>
</dbReference>
<dbReference type="PDBsum" id="8CIP"/>
<dbReference type="SMR" id="A0A0I9QGZ2"/>
<dbReference type="BRENDA" id="2.2.1.1">
    <property type="organism ID" value="623"/>
</dbReference>
<dbReference type="GO" id="GO:0005829">
    <property type="term" value="C:cytosol"/>
    <property type="evidence" value="ECO:0007669"/>
    <property type="project" value="TreeGrafter"/>
</dbReference>
<dbReference type="GO" id="GO:0046872">
    <property type="term" value="F:metal ion binding"/>
    <property type="evidence" value="ECO:0007669"/>
    <property type="project" value="UniProtKB-KW"/>
</dbReference>
<dbReference type="GO" id="GO:0004802">
    <property type="term" value="F:transketolase activity"/>
    <property type="evidence" value="ECO:0000314"/>
    <property type="project" value="UniProtKB"/>
</dbReference>
<dbReference type="GO" id="GO:0006098">
    <property type="term" value="P:pentose-phosphate shunt"/>
    <property type="evidence" value="ECO:0007669"/>
    <property type="project" value="TreeGrafter"/>
</dbReference>
<dbReference type="CDD" id="cd07033">
    <property type="entry name" value="TPP_PYR_DXS_TK_like"/>
    <property type="match status" value="1"/>
</dbReference>
<dbReference type="CDD" id="cd02012">
    <property type="entry name" value="TPP_TK"/>
    <property type="match status" value="1"/>
</dbReference>
<dbReference type="FunFam" id="3.40.50.920:FF:000003">
    <property type="entry name" value="Transketolase"/>
    <property type="match status" value="1"/>
</dbReference>
<dbReference type="FunFam" id="3.40.50.970:FF:000003">
    <property type="entry name" value="Transketolase"/>
    <property type="match status" value="1"/>
</dbReference>
<dbReference type="FunFam" id="3.40.50.970:FF:000004">
    <property type="entry name" value="Transketolase"/>
    <property type="match status" value="1"/>
</dbReference>
<dbReference type="Gene3D" id="3.40.50.920">
    <property type="match status" value="1"/>
</dbReference>
<dbReference type="Gene3D" id="3.40.50.970">
    <property type="match status" value="2"/>
</dbReference>
<dbReference type="InterPro" id="IPR029061">
    <property type="entry name" value="THDP-binding"/>
</dbReference>
<dbReference type="InterPro" id="IPR009014">
    <property type="entry name" value="Transketo_C/PFOR_II"/>
</dbReference>
<dbReference type="InterPro" id="IPR055152">
    <property type="entry name" value="Transketolase-like_C_2"/>
</dbReference>
<dbReference type="InterPro" id="IPR005475">
    <property type="entry name" value="Transketolase-like_Pyr-bd"/>
</dbReference>
<dbReference type="InterPro" id="IPR005478">
    <property type="entry name" value="Transketolase_bac-like"/>
</dbReference>
<dbReference type="InterPro" id="IPR020826">
    <property type="entry name" value="Transketolase_BS"/>
</dbReference>
<dbReference type="InterPro" id="IPR049557">
    <property type="entry name" value="Transketolase_CS"/>
</dbReference>
<dbReference type="InterPro" id="IPR033247">
    <property type="entry name" value="Transketolase_fam"/>
</dbReference>
<dbReference type="InterPro" id="IPR005474">
    <property type="entry name" value="Transketolase_N"/>
</dbReference>
<dbReference type="NCBIfam" id="TIGR00232">
    <property type="entry name" value="tktlase_bact"/>
    <property type="match status" value="1"/>
</dbReference>
<dbReference type="PANTHER" id="PTHR43522">
    <property type="entry name" value="TRANSKETOLASE"/>
    <property type="match status" value="1"/>
</dbReference>
<dbReference type="PANTHER" id="PTHR43522:SF2">
    <property type="entry name" value="TRANSKETOLASE 1-RELATED"/>
    <property type="match status" value="1"/>
</dbReference>
<dbReference type="Pfam" id="PF02779">
    <property type="entry name" value="Transket_pyr"/>
    <property type="match status" value="1"/>
</dbReference>
<dbReference type="Pfam" id="PF22613">
    <property type="entry name" value="Transketolase_C_1"/>
    <property type="match status" value="1"/>
</dbReference>
<dbReference type="Pfam" id="PF00456">
    <property type="entry name" value="Transketolase_N"/>
    <property type="match status" value="1"/>
</dbReference>
<dbReference type="SMART" id="SM00861">
    <property type="entry name" value="Transket_pyr"/>
    <property type="match status" value="1"/>
</dbReference>
<dbReference type="SUPFAM" id="SSF52518">
    <property type="entry name" value="Thiamin diphosphate-binding fold (THDP-binding)"/>
    <property type="match status" value="2"/>
</dbReference>
<dbReference type="SUPFAM" id="SSF52922">
    <property type="entry name" value="TK C-terminal domain-like"/>
    <property type="match status" value="1"/>
</dbReference>
<dbReference type="PROSITE" id="PS00801">
    <property type="entry name" value="TRANSKETOLASE_1"/>
    <property type="match status" value="1"/>
</dbReference>
<dbReference type="PROSITE" id="PS00802">
    <property type="entry name" value="TRANSKETOLASE_2"/>
    <property type="match status" value="1"/>
</dbReference>
<gene>
    <name evidence="6" type="primary">tkt</name>
</gene>
<protein>
    <recommendedName>
        <fullName evidence="3">Transketolase</fullName>
        <shortName evidence="3">TK</shortName>
        <ecNumber evidence="5">2.2.1.1</ecNumber>
    </recommendedName>
</protein>
<keyword id="KW-0002">3D-structure</keyword>
<keyword id="KW-0460">Magnesium</keyword>
<keyword id="KW-0479">Metal-binding</keyword>
<keyword id="KW-0786">Thiamine pyrophosphate</keyword>
<keyword id="KW-0808">Transferase</keyword>
<reference key="1">
    <citation type="submission" date="2015-06" db="EMBL/GenBank/DDBJ databases">
        <authorList>
            <person name="De Berardinis V."/>
        </authorList>
    </citation>
    <scope>NUCLEOTIDE SEQUENCE [GENOMIC DNA]</scope>
    <source>
        <strain>DSM 13240</strain>
    </source>
</reference>
<reference key="2">
    <citation type="journal article" date="2013" name="Adv. Synth. Catal.">
        <title>Thermostable transketolase from Geobacillus stearothermophilus: characterization and catalytic properties.</title>
        <authorList>
            <person name="Abdoul-Zabar J."/>
            <person name="Sorel I."/>
            <person name="Helaine V."/>
            <person name="Charmantray F."/>
            <person name="Devamani T."/>
            <person name="Yi D."/>
            <person name="De Berardinis V."/>
            <person name="Louis D."/>
            <person name="Marliere P."/>
            <person name="Fessner W.-D."/>
            <person name="Hecquet L."/>
        </authorList>
    </citation>
    <scope>FUNCTION</scope>
    <scope>CATALYTIC ACTIVITY</scope>
    <scope>SUBSTRATE SPECIFICITY</scope>
    <scope>COFACTOR</scope>
    <scope>BIOPHYSICOCHEMICAL PROPERTIES</scope>
    <scope>BIOTECHNOLOGY</scope>
    <source>
        <strain>DSM 13240</strain>
    </source>
</reference>
<accession>A0A0I9QGZ2</accession>
<sequence length="668" mass="71932">MAHSIEELAITTIRTLSIDAIEKAKSGHPGMPMGAAPMAYTLWTKFMNHNPANPNWFNRDRFVLSAGHGSMLLYSLLHLSGYDVSMDDLKQFRQWGSKTPGHPEYGHTPGVEATTGPLGQGIAMAVGMAMAERHLAATYNRDGFEIINHYTYAICGDGDLMEGVASEAASLAGHLKLGRLIVLYDSNDISLDGELNLSFSENVAQRFQAYGWQYLRVEDGNNIEEIAKALEEARADLSRPTLIEVKTTIGYGAPNKAGTSGVHGAPLGAQEAKLTKEAYRWTFAEDFYVPEEVYAHFRATVQEPGAKKEAKWNEQLAAYEQAHPELAAQLKRAIEGKLPDGWEASLPVYEAGKSLATRSSSGEVINAIAKAVPQLFGGSADLASSNKTLIKGGGNFLPDSYEGRNVWFGVREFAMGAALNGMALHGGLKVFGGTFFVFSDYLRPAIRLAALMGLPVIYVLTHDSIAVGEDGPTHEPIEHLASLRAMPNLSVIRPADANETAAAWRLALESTDKPTALVLTRQDVPTLAATAELAYEGVKKGAYVVSPAKNGAPEALLLATGSEVGLAVKAQEALAAEGIHVSVISMPSWDRFEAQPKSYRDEVLPPAVTKRLAIEMGASLGWERYVGAEGDILAIDRFGASAPGEKIMAEYGFTVDNVVRRTKALLGK</sequence>
<proteinExistence type="evidence at protein level"/>
<feature type="chain" id="PRO_0000435900" description="Transketolase">
    <location>
        <begin position="1"/>
        <end position="668"/>
    </location>
</feature>
<feature type="active site" description="Proton donor" evidence="1">
    <location>
        <position position="412"/>
    </location>
</feature>
<feature type="binding site" evidence="1">
    <location>
        <position position="28"/>
    </location>
    <ligand>
        <name>substrate</name>
    </ligand>
</feature>
<feature type="binding site" evidence="1">
    <location>
        <position position="68"/>
    </location>
    <ligand>
        <name>thiamine diphosphate</name>
        <dbReference type="ChEBI" id="CHEBI:58937"/>
    </ligand>
</feature>
<feature type="binding site" evidence="1">
    <location>
        <begin position="116"/>
        <end position="118"/>
    </location>
    <ligand>
        <name>thiamine diphosphate</name>
        <dbReference type="ChEBI" id="CHEBI:58937"/>
    </ligand>
</feature>
<feature type="binding site" evidence="1">
    <location>
        <position position="157"/>
    </location>
    <ligand>
        <name>Mg(2+)</name>
        <dbReference type="ChEBI" id="CHEBI:18420"/>
    </ligand>
</feature>
<feature type="binding site" evidence="1">
    <location>
        <position position="158"/>
    </location>
    <ligand>
        <name>thiamine diphosphate</name>
        <dbReference type="ChEBI" id="CHEBI:58937"/>
    </ligand>
</feature>
<feature type="binding site" evidence="1">
    <location>
        <position position="187"/>
    </location>
    <ligand>
        <name>Mg(2+)</name>
        <dbReference type="ChEBI" id="CHEBI:18420"/>
    </ligand>
</feature>
<feature type="binding site" evidence="1">
    <location>
        <position position="187"/>
    </location>
    <ligand>
        <name>thiamine diphosphate</name>
        <dbReference type="ChEBI" id="CHEBI:58937"/>
    </ligand>
</feature>
<feature type="binding site" evidence="1">
    <location>
        <position position="189"/>
    </location>
    <ligand>
        <name>Mg(2+)</name>
        <dbReference type="ChEBI" id="CHEBI:18420"/>
    </ligand>
</feature>
<feature type="binding site" evidence="1">
    <location>
        <position position="263"/>
    </location>
    <ligand>
        <name>substrate</name>
    </ligand>
</feature>
<feature type="binding site" evidence="1">
    <location>
        <position position="263"/>
    </location>
    <ligand>
        <name>thiamine diphosphate</name>
        <dbReference type="ChEBI" id="CHEBI:58937"/>
    </ligand>
</feature>
<feature type="binding site" evidence="1">
    <location>
        <position position="358"/>
    </location>
    <ligand>
        <name>substrate</name>
    </ligand>
</feature>
<feature type="binding site" evidence="1">
    <location>
        <position position="385"/>
    </location>
    <ligand>
        <name>substrate</name>
    </ligand>
</feature>
<feature type="binding site" evidence="1">
    <location>
        <position position="438"/>
    </location>
    <ligand>
        <name>thiamine diphosphate</name>
        <dbReference type="ChEBI" id="CHEBI:58937"/>
    </ligand>
</feature>
<feature type="binding site" evidence="1">
    <location>
        <position position="462"/>
    </location>
    <ligand>
        <name>substrate</name>
    </ligand>
</feature>
<feature type="binding site" evidence="1">
    <location>
        <position position="470"/>
    </location>
    <ligand>
        <name>substrate</name>
    </ligand>
</feature>
<feature type="binding site" evidence="1">
    <location>
        <position position="474"/>
    </location>
    <ligand>
        <name>substrate</name>
    </ligand>
</feature>
<feature type="binding site" evidence="1">
    <location>
        <position position="521"/>
    </location>
    <ligand>
        <name>substrate</name>
    </ligand>
</feature>
<feature type="helix" evidence="7">
    <location>
        <begin position="5"/>
        <end position="24"/>
    </location>
</feature>
<feature type="helix" evidence="7">
    <location>
        <begin position="30"/>
        <end position="45"/>
    </location>
</feature>
<feature type="strand" evidence="7">
    <location>
        <begin position="61"/>
        <end position="66"/>
    </location>
</feature>
<feature type="helix" evidence="7">
    <location>
        <begin position="67"/>
        <end position="69"/>
    </location>
</feature>
<feature type="helix" evidence="7">
    <location>
        <begin position="70"/>
        <end position="80"/>
    </location>
</feature>
<feature type="helix" evidence="7">
    <location>
        <begin position="86"/>
        <end position="89"/>
    </location>
</feature>
<feature type="turn" evidence="7">
    <location>
        <begin position="90"/>
        <end position="93"/>
    </location>
</feature>
<feature type="turn" evidence="7">
    <location>
        <begin position="105"/>
        <end position="107"/>
    </location>
</feature>
<feature type="helix" evidence="7">
    <location>
        <begin position="120"/>
        <end position="139"/>
    </location>
</feature>
<feature type="strand" evidence="7">
    <location>
        <begin position="151"/>
        <end position="155"/>
    </location>
</feature>
<feature type="helix" evidence="7">
    <location>
        <begin position="157"/>
        <end position="161"/>
    </location>
</feature>
<feature type="helix" evidence="7">
    <location>
        <begin position="163"/>
        <end position="174"/>
    </location>
</feature>
<feature type="strand" evidence="7">
    <location>
        <begin position="180"/>
        <end position="186"/>
    </location>
</feature>
<feature type="strand" evidence="7">
    <location>
        <begin position="188"/>
        <end position="190"/>
    </location>
</feature>
<feature type="helix" evidence="7">
    <location>
        <begin position="195"/>
        <end position="197"/>
    </location>
</feature>
<feature type="helix" evidence="7">
    <location>
        <begin position="203"/>
        <end position="210"/>
    </location>
</feature>
<feature type="strand" evidence="7">
    <location>
        <begin position="213"/>
        <end position="218"/>
    </location>
</feature>
<feature type="helix" evidence="7">
    <location>
        <begin position="223"/>
        <end position="235"/>
    </location>
</feature>
<feature type="strand" evidence="7">
    <location>
        <begin position="241"/>
        <end position="246"/>
    </location>
</feature>
<feature type="turn" evidence="7">
    <location>
        <begin position="249"/>
        <end position="252"/>
    </location>
</feature>
<feature type="turn" evidence="7">
    <location>
        <begin position="254"/>
        <end position="258"/>
    </location>
</feature>
<feature type="helix" evidence="7">
    <location>
        <begin position="260"/>
        <end position="262"/>
    </location>
</feature>
<feature type="strand" evidence="7">
    <location>
        <begin position="263"/>
        <end position="265"/>
    </location>
</feature>
<feature type="helix" evidence="7">
    <location>
        <begin position="269"/>
        <end position="279"/>
    </location>
</feature>
<feature type="helix" evidence="7">
    <location>
        <begin position="291"/>
        <end position="300"/>
    </location>
</feature>
<feature type="helix" evidence="7">
    <location>
        <begin position="302"/>
        <end position="322"/>
    </location>
</feature>
<feature type="helix" evidence="7">
    <location>
        <begin position="324"/>
        <end position="334"/>
    </location>
</feature>
<feature type="helix" evidence="7">
    <location>
        <begin position="342"/>
        <end position="345"/>
    </location>
</feature>
<feature type="strand" evidence="7">
    <location>
        <begin position="354"/>
        <end position="356"/>
    </location>
</feature>
<feature type="helix" evidence="7">
    <location>
        <begin position="357"/>
        <end position="371"/>
    </location>
</feature>
<feature type="strand" evidence="7">
    <location>
        <begin position="375"/>
        <end position="381"/>
    </location>
</feature>
<feature type="helix" evidence="7">
    <location>
        <begin position="383"/>
        <end position="386"/>
    </location>
</feature>
<feature type="strand" evidence="7">
    <location>
        <begin position="405"/>
        <end position="407"/>
    </location>
</feature>
<feature type="helix" evidence="7">
    <location>
        <begin position="412"/>
        <end position="425"/>
    </location>
</feature>
<feature type="strand" evidence="7">
    <location>
        <begin position="429"/>
        <end position="435"/>
    </location>
</feature>
<feature type="helix" evidence="7">
    <location>
        <begin position="436"/>
        <end position="442"/>
    </location>
</feature>
<feature type="helix" evidence="7">
    <location>
        <begin position="443"/>
        <end position="452"/>
    </location>
</feature>
<feature type="strand" evidence="7">
    <location>
        <begin position="457"/>
        <end position="461"/>
    </location>
</feature>
<feature type="helix" evidence="7">
    <location>
        <begin position="465"/>
        <end position="467"/>
    </location>
</feature>
<feature type="helix" evidence="7">
    <location>
        <begin position="472"/>
        <end position="474"/>
    </location>
</feature>
<feature type="helix" evidence="7">
    <location>
        <begin position="479"/>
        <end position="484"/>
    </location>
</feature>
<feature type="strand" evidence="7">
    <location>
        <begin position="490"/>
        <end position="492"/>
    </location>
</feature>
<feature type="helix" evidence="7">
    <location>
        <begin position="497"/>
        <end position="509"/>
    </location>
</feature>
<feature type="strand" evidence="7">
    <location>
        <begin position="511"/>
        <end position="513"/>
    </location>
</feature>
<feature type="strand" evidence="7">
    <location>
        <begin position="515"/>
        <end position="518"/>
    </location>
</feature>
<feature type="strand" evidence="7">
    <location>
        <begin position="521"/>
        <end position="525"/>
    </location>
</feature>
<feature type="helix" evidence="7">
    <location>
        <begin position="530"/>
        <end position="539"/>
    </location>
</feature>
<feature type="strand" evidence="7">
    <location>
        <begin position="543"/>
        <end position="546"/>
    </location>
</feature>
<feature type="strand" evidence="7">
    <location>
        <begin position="554"/>
        <end position="559"/>
    </location>
</feature>
<feature type="helix" evidence="7">
    <location>
        <begin position="563"/>
        <end position="575"/>
    </location>
</feature>
<feature type="turn" evidence="7">
    <location>
        <begin position="576"/>
        <end position="578"/>
    </location>
</feature>
<feature type="strand" evidence="7">
    <location>
        <begin position="581"/>
        <end position="585"/>
    </location>
</feature>
<feature type="helix" evidence="7">
    <location>
        <begin position="589"/>
        <end position="593"/>
    </location>
</feature>
<feature type="helix" evidence="7">
    <location>
        <begin position="597"/>
        <end position="603"/>
    </location>
</feature>
<feature type="strand" evidence="7">
    <location>
        <begin position="611"/>
        <end position="614"/>
    </location>
</feature>
<feature type="turn" evidence="7">
    <location>
        <begin position="620"/>
        <end position="622"/>
    </location>
</feature>
<feature type="helix" evidence="7">
    <location>
        <begin position="623"/>
        <end position="626"/>
    </location>
</feature>
<feature type="strand" evidence="7">
    <location>
        <begin position="631"/>
        <end position="633"/>
    </location>
</feature>
<feature type="helix" evidence="7">
    <location>
        <begin position="644"/>
        <end position="650"/>
    </location>
</feature>
<feature type="helix" evidence="7">
    <location>
        <begin position="655"/>
        <end position="665"/>
    </location>
</feature>
<organism>
    <name type="scientific">Geobacillus stearothermophilus</name>
    <name type="common">Bacillus stearothermophilus</name>
    <dbReference type="NCBI Taxonomy" id="1422"/>
    <lineage>
        <taxon>Bacteria</taxon>
        <taxon>Bacillati</taxon>
        <taxon>Bacillota</taxon>
        <taxon>Bacilli</taxon>
        <taxon>Bacillales</taxon>
        <taxon>Anoxybacillaceae</taxon>
        <taxon>Geobacillus</taxon>
    </lineage>
</organism>
<name>TKT_GEOSE</name>
<evidence type="ECO:0000250" key="1">
    <source>
        <dbReference type="UniProtKB" id="P27302"/>
    </source>
</evidence>
<evidence type="ECO:0000269" key="2">
    <source ref="2"/>
</evidence>
<evidence type="ECO:0000303" key="3">
    <source ref="2"/>
</evidence>
<evidence type="ECO:0000305" key="4"/>
<evidence type="ECO:0000305" key="5">
    <source ref="2"/>
</evidence>
<evidence type="ECO:0000312" key="6">
    <source>
        <dbReference type="EMBL" id="CTQ31223.1"/>
    </source>
</evidence>
<evidence type="ECO:0007829" key="7">
    <source>
        <dbReference type="PDB" id="8CIP"/>
    </source>
</evidence>